<protein>
    <recommendedName>
        <fullName evidence="1">NADH-quinone oxidoreductase subunit H</fullName>
        <ecNumber evidence="1">7.1.1.-</ecNumber>
    </recommendedName>
    <alternativeName>
        <fullName evidence="1">NADH dehydrogenase I subunit H</fullName>
    </alternativeName>
    <alternativeName>
        <fullName evidence="1">NDH-1 subunit H</fullName>
    </alternativeName>
</protein>
<organism>
    <name type="scientific">Aeromonas salmonicida (strain A449)</name>
    <dbReference type="NCBI Taxonomy" id="382245"/>
    <lineage>
        <taxon>Bacteria</taxon>
        <taxon>Pseudomonadati</taxon>
        <taxon>Pseudomonadota</taxon>
        <taxon>Gammaproteobacteria</taxon>
        <taxon>Aeromonadales</taxon>
        <taxon>Aeromonadaceae</taxon>
        <taxon>Aeromonas</taxon>
    </lineage>
</organism>
<accession>A4SLN8</accession>
<dbReference type="EC" id="7.1.1.-" evidence="1"/>
<dbReference type="EMBL" id="CP000644">
    <property type="protein sequence ID" value="ABO89810.1"/>
    <property type="molecule type" value="Genomic_DNA"/>
</dbReference>
<dbReference type="RefSeq" id="WP_005314900.1">
    <property type="nucleotide sequence ID" value="NC_009348.1"/>
</dbReference>
<dbReference type="SMR" id="A4SLN8"/>
<dbReference type="STRING" id="29491.GCA_000820065_02200"/>
<dbReference type="GeneID" id="79879455"/>
<dbReference type="KEGG" id="asa:ASA_1730"/>
<dbReference type="eggNOG" id="COG1005">
    <property type="taxonomic scope" value="Bacteria"/>
</dbReference>
<dbReference type="HOGENOM" id="CLU_015134_0_1_6"/>
<dbReference type="Proteomes" id="UP000000225">
    <property type="component" value="Chromosome"/>
</dbReference>
<dbReference type="GO" id="GO:0005886">
    <property type="term" value="C:plasma membrane"/>
    <property type="evidence" value="ECO:0007669"/>
    <property type="project" value="UniProtKB-SubCell"/>
</dbReference>
<dbReference type="GO" id="GO:0003954">
    <property type="term" value="F:NADH dehydrogenase activity"/>
    <property type="evidence" value="ECO:0007669"/>
    <property type="project" value="TreeGrafter"/>
</dbReference>
<dbReference type="GO" id="GO:0016655">
    <property type="term" value="F:oxidoreductase activity, acting on NAD(P)H, quinone or similar compound as acceptor"/>
    <property type="evidence" value="ECO:0007669"/>
    <property type="project" value="UniProtKB-UniRule"/>
</dbReference>
<dbReference type="GO" id="GO:0048038">
    <property type="term" value="F:quinone binding"/>
    <property type="evidence" value="ECO:0007669"/>
    <property type="project" value="UniProtKB-KW"/>
</dbReference>
<dbReference type="GO" id="GO:0009060">
    <property type="term" value="P:aerobic respiration"/>
    <property type="evidence" value="ECO:0007669"/>
    <property type="project" value="TreeGrafter"/>
</dbReference>
<dbReference type="HAMAP" id="MF_01350">
    <property type="entry name" value="NDH1_NuoH"/>
    <property type="match status" value="1"/>
</dbReference>
<dbReference type="InterPro" id="IPR001694">
    <property type="entry name" value="NADH_UbQ_OxRdtase_su1/FPO"/>
</dbReference>
<dbReference type="InterPro" id="IPR018086">
    <property type="entry name" value="NADH_UbQ_OxRdtase_su1_CS"/>
</dbReference>
<dbReference type="NCBIfam" id="NF004740">
    <property type="entry name" value="PRK06076.1-1"/>
    <property type="match status" value="1"/>
</dbReference>
<dbReference type="NCBIfam" id="NF004741">
    <property type="entry name" value="PRK06076.1-2"/>
    <property type="match status" value="1"/>
</dbReference>
<dbReference type="PANTHER" id="PTHR11432">
    <property type="entry name" value="NADH DEHYDROGENASE SUBUNIT 1"/>
    <property type="match status" value="1"/>
</dbReference>
<dbReference type="PANTHER" id="PTHR11432:SF3">
    <property type="entry name" value="NADH-UBIQUINONE OXIDOREDUCTASE CHAIN 1"/>
    <property type="match status" value="1"/>
</dbReference>
<dbReference type="Pfam" id="PF00146">
    <property type="entry name" value="NADHdh"/>
    <property type="match status" value="1"/>
</dbReference>
<dbReference type="PROSITE" id="PS00667">
    <property type="entry name" value="COMPLEX1_ND1_1"/>
    <property type="match status" value="1"/>
</dbReference>
<dbReference type="PROSITE" id="PS00668">
    <property type="entry name" value="COMPLEX1_ND1_2"/>
    <property type="match status" value="1"/>
</dbReference>
<reference key="1">
    <citation type="journal article" date="2008" name="BMC Genomics">
        <title>The genome of Aeromonas salmonicida subsp. salmonicida A449: insights into the evolution of a fish pathogen.</title>
        <authorList>
            <person name="Reith M.E."/>
            <person name="Singh R.K."/>
            <person name="Curtis B."/>
            <person name="Boyd J.M."/>
            <person name="Bouevitch A."/>
            <person name="Kimball J."/>
            <person name="Munholland J."/>
            <person name="Murphy C."/>
            <person name="Sarty D."/>
            <person name="Williams J."/>
            <person name="Nash J.H."/>
            <person name="Johnson S.C."/>
            <person name="Brown L.L."/>
        </authorList>
    </citation>
    <scope>NUCLEOTIDE SEQUENCE [LARGE SCALE GENOMIC DNA]</scope>
    <source>
        <strain>A449</strain>
    </source>
</reference>
<sequence>MSDSLIDLLLEVGKALIVLVGIVGAGAFMSFIERRLLALWQDRYGPNRVGPFGLLQLAADMIKMFFKEDWIPPFADRRIFILAPIIAFTAFILAFAVVPLTPTWGVADLNVGLLYILAIAGLAVYAVLFAGWSSNNKYSLLGSLRASAQTLSYEVFLGLSLMGIVIQTGSFNLRDIVEAQAGLWNVVPQILGFITFLFAGVAVTHRHPFDQPEAEQELADGYHIEYAGMKWGLFFVGEYIGIVLISSLIVTLFFGGWHGPWLPPFIWFALKTACFMVFFILLRASLPRPRFDQVMSFGWKVCLPLTLVNMLITGAVVLINVQ</sequence>
<keyword id="KW-0997">Cell inner membrane</keyword>
<keyword id="KW-1003">Cell membrane</keyword>
<keyword id="KW-0472">Membrane</keyword>
<keyword id="KW-0520">NAD</keyword>
<keyword id="KW-0874">Quinone</keyword>
<keyword id="KW-1278">Translocase</keyword>
<keyword id="KW-0812">Transmembrane</keyword>
<keyword id="KW-1133">Transmembrane helix</keyword>
<keyword id="KW-0830">Ubiquinone</keyword>
<comment type="function">
    <text evidence="1">NDH-1 shuttles electrons from NADH, via FMN and iron-sulfur (Fe-S) centers, to quinones in the respiratory chain. The immediate electron acceptor for the enzyme in this species is believed to be ubiquinone. Couples the redox reaction to proton translocation (for every two electrons transferred, four hydrogen ions are translocated across the cytoplasmic membrane), and thus conserves the redox energy in a proton gradient. This subunit may bind ubiquinone.</text>
</comment>
<comment type="catalytic activity">
    <reaction evidence="1">
        <text>a quinone + NADH + 5 H(+)(in) = a quinol + NAD(+) + 4 H(+)(out)</text>
        <dbReference type="Rhea" id="RHEA:57888"/>
        <dbReference type="ChEBI" id="CHEBI:15378"/>
        <dbReference type="ChEBI" id="CHEBI:24646"/>
        <dbReference type="ChEBI" id="CHEBI:57540"/>
        <dbReference type="ChEBI" id="CHEBI:57945"/>
        <dbReference type="ChEBI" id="CHEBI:132124"/>
    </reaction>
</comment>
<comment type="subunit">
    <text evidence="1">NDH-1 is composed of 14 different subunits. Subunits NuoA, H, J, K, L, M, N constitute the membrane sector of the complex.</text>
</comment>
<comment type="subcellular location">
    <subcellularLocation>
        <location evidence="1">Cell inner membrane</location>
        <topology evidence="1">Multi-pass membrane protein</topology>
    </subcellularLocation>
</comment>
<comment type="similarity">
    <text evidence="1">Belongs to the complex I subunit 1 family.</text>
</comment>
<name>NUOH_AERS4</name>
<gene>
    <name evidence="1" type="primary">nuoH</name>
    <name type="ordered locus">ASA_1730</name>
</gene>
<feature type="chain" id="PRO_0000298790" description="NADH-quinone oxidoreductase subunit H">
    <location>
        <begin position="1"/>
        <end position="322"/>
    </location>
</feature>
<feature type="transmembrane region" description="Helical" evidence="1">
    <location>
        <begin position="12"/>
        <end position="32"/>
    </location>
</feature>
<feature type="transmembrane region" description="Helical" evidence="1">
    <location>
        <begin position="79"/>
        <end position="99"/>
    </location>
</feature>
<feature type="transmembrane region" description="Helical" evidence="1">
    <location>
        <begin position="111"/>
        <end position="131"/>
    </location>
</feature>
<feature type="transmembrane region" description="Helical" evidence="1">
    <location>
        <begin position="151"/>
        <end position="171"/>
    </location>
</feature>
<feature type="transmembrane region" description="Helical" evidence="1">
    <location>
        <begin position="183"/>
        <end position="203"/>
    </location>
</feature>
<feature type="transmembrane region" description="Helical" evidence="1">
    <location>
        <begin position="234"/>
        <end position="254"/>
    </location>
</feature>
<feature type="transmembrane region" description="Helical" evidence="1">
    <location>
        <begin position="262"/>
        <end position="282"/>
    </location>
</feature>
<feature type="transmembrane region" description="Helical" evidence="1">
    <location>
        <begin position="301"/>
        <end position="321"/>
    </location>
</feature>
<proteinExistence type="inferred from homology"/>
<evidence type="ECO:0000255" key="1">
    <source>
        <dbReference type="HAMAP-Rule" id="MF_01350"/>
    </source>
</evidence>